<feature type="chain" id="PRO_0000304810" description="Phosphatidylinositol-3,5-bisphosphate 3-phosphatase MTMR4">
    <location>
        <begin position="1"/>
        <end position="1190"/>
    </location>
</feature>
<feature type="domain" description="Myotubularin phosphatase" evidence="5">
    <location>
        <begin position="153"/>
        <end position="570"/>
    </location>
</feature>
<feature type="zinc finger region" description="FYVE-type" evidence="4">
    <location>
        <begin position="1109"/>
        <end position="1169"/>
    </location>
</feature>
<feature type="region of interest" description="Disordered" evidence="6">
    <location>
        <begin position="616"/>
        <end position="694"/>
    </location>
</feature>
<feature type="region of interest" description="Disordered" evidence="6">
    <location>
        <begin position="724"/>
        <end position="749"/>
    </location>
</feature>
<feature type="region of interest" description="Disordered" evidence="6">
    <location>
        <begin position="773"/>
        <end position="848"/>
    </location>
</feature>
<feature type="coiled-coil region" evidence="3">
    <location>
        <begin position="1020"/>
        <end position="1052"/>
    </location>
</feature>
<feature type="short sequence motif" description="PY-motif; substrate motif for NEDD4" evidence="2">
    <location>
        <begin position="999"/>
        <end position="1003"/>
    </location>
</feature>
<feature type="compositionally biased region" description="Polar residues" evidence="6">
    <location>
        <begin position="618"/>
        <end position="637"/>
    </location>
</feature>
<feature type="compositionally biased region" description="Polar residues" evidence="6">
    <location>
        <begin position="782"/>
        <end position="847"/>
    </location>
</feature>
<feature type="active site" description="Phosphocysteine intermediate" evidence="1">
    <location>
        <position position="407"/>
    </location>
</feature>
<feature type="binding site" evidence="1">
    <location>
        <position position="320"/>
    </location>
    <ligand>
        <name>a 1,2-diacyl-sn-glycero-3-phospho-(1D-myo-inositol-3,5-bisphosphate)</name>
        <dbReference type="ChEBI" id="CHEBI:57923"/>
    </ligand>
</feature>
<feature type="binding site" evidence="1">
    <location>
        <position position="320"/>
    </location>
    <ligand>
        <name>a 1,2-diacyl-sn-glycero-3-phospho-(1D-myo-inositol-3-phosphate)</name>
        <dbReference type="ChEBI" id="CHEBI:58088"/>
    </ligand>
</feature>
<feature type="binding site" evidence="1">
    <location>
        <position position="345"/>
    </location>
    <ligand>
        <name>a 1,2-diacyl-sn-glycero-3-phospho-(1D-myo-inositol-3,5-bisphosphate)</name>
        <dbReference type="ChEBI" id="CHEBI:57923"/>
    </ligand>
</feature>
<feature type="binding site" evidence="1">
    <location>
        <position position="345"/>
    </location>
    <ligand>
        <name>a 1,2-diacyl-sn-glycero-3-phospho-(1D-myo-inositol-3-phosphate)</name>
        <dbReference type="ChEBI" id="CHEBI:58088"/>
    </ligand>
</feature>
<feature type="binding site" evidence="1">
    <location>
        <position position="346"/>
    </location>
    <ligand>
        <name>a 1,2-diacyl-sn-glycero-3-phospho-(1D-myo-inositol-3,5-bisphosphate)</name>
        <dbReference type="ChEBI" id="CHEBI:57923"/>
    </ligand>
</feature>
<feature type="binding site" evidence="1">
    <location>
        <position position="346"/>
    </location>
    <ligand>
        <name>a 1,2-diacyl-sn-glycero-3-phospho-(1D-myo-inositol-3-phosphate)</name>
        <dbReference type="ChEBI" id="CHEBI:58088"/>
    </ligand>
</feature>
<feature type="binding site" evidence="1">
    <location>
        <position position="408"/>
    </location>
    <ligand>
        <name>a 1,2-diacyl-sn-glycero-3-phospho-(1D-myo-inositol-3,5-bisphosphate)</name>
        <dbReference type="ChEBI" id="CHEBI:57923"/>
    </ligand>
</feature>
<feature type="binding site" evidence="1">
    <location>
        <position position="408"/>
    </location>
    <ligand>
        <name>a 1,2-diacyl-sn-glycero-3-phospho-(1D-myo-inositol-3-phosphate)</name>
        <dbReference type="ChEBI" id="CHEBI:58088"/>
    </ligand>
</feature>
<feature type="binding site" evidence="1">
    <location>
        <position position="409"/>
    </location>
    <ligand>
        <name>a 1,2-diacyl-sn-glycero-3-phospho-(1D-myo-inositol-3,5-bisphosphate)</name>
        <dbReference type="ChEBI" id="CHEBI:57923"/>
    </ligand>
</feature>
<feature type="binding site" evidence="1">
    <location>
        <position position="409"/>
    </location>
    <ligand>
        <name>a 1,2-diacyl-sn-glycero-3-phospho-(1D-myo-inositol-3-phosphate)</name>
        <dbReference type="ChEBI" id="CHEBI:58088"/>
    </ligand>
</feature>
<feature type="binding site" evidence="1">
    <location>
        <position position="410"/>
    </location>
    <ligand>
        <name>a 1,2-diacyl-sn-glycero-3-phospho-(1D-myo-inositol-3,5-bisphosphate)</name>
        <dbReference type="ChEBI" id="CHEBI:57923"/>
    </ligand>
</feature>
<feature type="binding site" evidence="1">
    <location>
        <position position="410"/>
    </location>
    <ligand>
        <name>a 1,2-diacyl-sn-glycero-3-phospho-(1D-myo-inositol-3-phosphate)</name>
        <dbReference type="ChEBI" id="CHEBI:58088"/>
    </ligand>
</feature>
<feature type="binding site" evidence="1">
    <location>
        <position position="411"/>
    </location>
    <ligand>
        <name>a 1,2-diacyl-sn-glycero-3-phospho-(1D-myo-inositol-3,5-bisphosphate)</name>
        <dbReference type="ChEBI" id="CHEBI:57923"/>
    </ligand>
</feature>
<feature type="binding site" evidence="1">
    <location>
        <position position="411"/>
    </location>
    <ligand>
        <name>a 1,2-diacyl-sn-glycero-3-phospho-(1D-myo-inositol-3-phosphate)</name>
        <dbReference type="ChEBI" id="CHEBI:58088"/>
    </ligand>
</feature>
<feature type="binding site" evidence="1">
    <location>
        <position position="412"/>
    </location>
    <ligand>
        <name>a 1,2-diacyl-sn-glycero-3-phospho-(1D-myo-inositol-3,5-bisphosphate)</name>
        <dbReference type="ChEBI" id="CHEBI:57923"/>
    </ligand>
</feature>
<feature type="binding site" evidence="1">
    <location>
        <position position="412"/>
    </location>
    <ligand>
        <name>a 1,2-diacyl-sn-glycero-3-phospho-(1D-myo-inositol-3-phosphate)</name>
        <dbReference type="ChEBI" id="CHEBI:58088"/>
    </ligand>
</feature>
<feature type="binding site" evidence="1">
    <location>
        <position position="413"/>
    </location>
    <ligand>
        <name>a 1,2-diacyl-sn-glycero-3-phospho-(1D-myo-inositol-3,5-bisphosphate)</name>
        <dbReference type="ChEBI" id="CHEBI:57923"/>
    </ligand>
</feature>
<feature type="binding site" evidence="1">
    <location>
        <position position="413"/>
    </location>
    <ligand>
        <name>a 1,2-diacyl-sn-glycero-3-phospho-(1D-myo-inositol-3-phosphate)</name>
        <dbReference type="ChEBI" id="CHEBI:58088"/>
    </ligand>
</feature>
<feature type="binding site" evidence="1">
    <location>
        <position position="449"/>
    </location>
    <ligand>
        <name>a 1,2-diacyl-sn-glycero-3-phospho-(1D-myo-inositol-3,5-bisphosphate)</name>
        <dbReference type="ChEBI" id="CHEBI:57923"/>
    </ligand>
</feature>
<feature type="binding site" evidence="1">
    <location>
        <position position="453"/>
    </location>
    <ligand>
        <name>a 1,2-diacyl-sn-glycero-3-phospho-(1D-myo-inositol-3,5-bisphosphate)</name>
        <dbReference type="ChEBI" id="CHEBI:57923"/>
    </ligand>
</feature>
<feature type="binding site" evidence="1">
    <location>
        <position position="453"/>
    </location>
    <ligand>
        <name>a 1,2-diacyl-sn-glycero-3-phospho-(1D-myo-inositol-3-phosphate)</name>
        <dbReference type="ChEBI" id="CHEBI:58088"/>
    </ligand>
</feature>
<feature type="binding site" evidence="4">
    <location>
        <position position="1115"/>
    </location>
    <ligand>
        <name>Zn(2+)</name>
        <dbReference type="ChEBI" id="CHEBI:29105"/>
        <label>1</label>
    </ligand>
</feature>
<feature type="binding site" evidence="4">
    <location>
        <position position="1118"/>
    </location>
    <ligand>
        <name>Zn(2+)</name>
        <dbReference type="ChEBI" id="CHEBI:29105"/>
        <label>1</label>
    </ligand>
</feature>
<feature type="binding site" evidence="4">
    <location>
        <position position="1131"/>
    </location>
    <ligand>
        <name>Zn(2+)</name>
        <dbReference type="ChEBI" id="CHEBI:29105"/>
        <label>2</label>
    </ligand>
</feature>
<feature type="binding site" evidence="4">
    <location>
        <position position="1134"/>
    </location>
    <ligand>
        <name>Zn(2+)</name>
        <dbReference type="ChEBI" id="CHEBI:29105"/>
        <label>2</label>
    </ligand>
</feature>
<feature type="binding site" evidence="4">
    <location>
        <position position="1139"/>
    </location>
    <ligand>
        <name>Zn(2+)</name>
        <dbReference type="ChEBI" id="CHEBI:29105"/>
        <label>1</label>
    </ligand>
</feature>
<feature type="binding site" evidence="4">
    <location>
        <position position="1142"/>
    </location>
    <ligand>
        <name>Zn(2+)</name>
        <dbReference type="ChEBI" id="CHEBI:29105"/>
        <label>1</label>
    </ligand>
</feature>
<feature type="binding site" evidence="4">
    <location>
        <position position="1161"/>
    </location>
    <ligand>
        <name>Zn(2+)</name>
        <dbReference type="ChEBI" id="CHEBI:29105"/>
        <label>2</label>
    </ligand>
</feature>
<feature type="binding site" evidence="4">
    <location>
        <position position="1164"/>
    </location>
    <ligand>
        <name>Zn(2+)</name>
        <dbReference type="ChEBI" id="CHEBI:29105"/>
        <label>2</label>
    </ligand>
</feature>
<feature type="modified residue" description="Phosphoserine" evidence="2">
    <location>
        <position position="8"/>
    </location>
</feature>
<feature type="modified residue" description="Phosphoserine" evidence="9 10">
    <location>
        <position position="610"/>
    </location>
</feature>
<feature type="modified residue" description="Phosphoserine" evidence="2">
    <location>
        <position position="629"/>
    </location>
</feature>
<feature type="splice variant" id="VSP_028126" description="In isoform 2." evidence="7">
    <location>
        <begin position="497"/>
        <end position="553"/>
    </location>
</feature>
<name>MTMR4_MOUSE</name>
<sequence length="1190" mass="132885">MGEEGPPSLEYIQAKDLFPPKELVKEEENLQVPFTVLQGEGVEFLGRATDALIAISNYRLHIKFKDSVINVPLRMIDSVESRDMFQLHIACKDSKVVRCHFSTFKQCQEWLSRLSRATARPAKPEDLFAFAYHAWCLGLTEEDQHTHLCQPGEHIRCRQEAELARMGFDLQNVWRVSHINSNYKLCPSYPQKLLVPVWITDKELENVASFRSWKRIPVVVYRHLRNGAAIARCSQPEISWWGWRNADDEYLVTSIAKACALDPGTRASGGSLSTGTNDASEACDTDFDSSLTACSGVESTAAPQKLLILDARSYTAAVANRAKGGGCECEEYYPNCEVLFMGMANIHAIRNSFQYLRAVCSQMPDPSNWLSALESTKWLQHLSVMLKAAVLVANTVDREGRPVLVHCSDGWDRTPQIVALAKILLDPYYRTLEGFQVLVESDWLDFGHKFGDRCGHQENAEDQNEQCPVFLQWLDSVHQLLKQFPCLFEFNEAFLVKLVQHTYSCLYGTFLANNPCEREKRNIYKRTCSVWALLRAGNKNFHNFLYTPGSDVVLHPVCHVRALHLWTAVYLPASSPCTLGEENMDLYLSPVAQSQEFSGRSLDRLPKTRSMDDLLSACDTSSPLTRTSSDPNLNNHSQEVRGSLEPWHSSPEGAETVIDSGVGSPQLTVGEMGLPPPLPSSQKEYLSNKPFKGHKSCSLSYKLLNTSVSWEMKSNTSDIKVLEETEALAPDPSAQEEQGRTSDGLGKPPEQFLEKEAVSSLCSVSSKCGGACDFPEPPQDPLTGTPQQPHLDSMQISPSRCTPDHSQGSLCNPPSVASQTPEPNTDLLSQDPPGSTASISHQEQPSSVPDLIYKKEDAGKRGSKNGQLLENPRFGKMPLELARKPISQSQISEFSFLGSNWDSFQGMMTSFPSGETTPRRLLAYGCCSKRPSNKHIRAAGPCLGGQWAQREGMKSPVCSSHSNGHCTGPGGKNNRMWFSSHPKQVSSTKPSLLSCPSPVPPLYLDDDGLPFPTDVIQHRLRQIEAGYRQEVEQLRRQVRELQMRLDIRHCCAPPAEPPMDYEDDFTCLKESDGSDTEDFGSDHSEDCLSEASWEPVDKKETEVTRWVPDHMASHCFNCDCEFWLAKRRHHCRNCGNVFCAGCCHLKLPIPDQQLYDPVLVCNSCYEHIQVSRARELMSQHLKKPIATASS</sequence>
<keyword id="KW-0025">Alternative splicing</keyword>
<keyword id="KW-0175">Coiled coil</keyword>
<keyword id="KW-0968">Cytoplasmic vesicle</keyword>
<keyword id="KW-0967">Endosome</keyword>
<keyword id="KW-0378">Hydrolase</keyword>
<keyword id="KW-0472">Membrane</keyword>
<keyword id="KW-0479">Metal-binding</keyword>
<keyword id="KW-0597">Phosphoprotein</keyword>
<keyword id="KW-1185">Reference proteome</keyword>
<keyword id="KW-0832">Ubl conjugation</keyword>
<keyword id="KW-0862">Zinc</keyword>
<keyword id="KW-0863">Zinc-finger</keyword>
<reference key="1">
    <citation type="submission" date="2000-05" db="EMBL/GenBank/DDBJ databases">
        <title>Isolation of a FYVE zinc finger containing phosphatase expressed in mouse bone marrow derived dendritic cells.</title>
        <authorList>
            <person name="Gorski K.S."/>
            <person name="Shin T."/>
            <person name="Otuji M."/>
            <person name="Suyi T."/>
            <person name="Pardoll D."/>
            <person name="Tsuchiya H."/>
        </authorList>
    </citation>
    <scope>NUCLEOTIDE SEQUENCE [MRNA] (ISOFORM 1)</scope>
    <source>
        <strain>BALB/cJ</strain>
        <tissue>Bone marrow</tissue>
    </source>
</reference>
<reference key="2">
    <citation type="journal article" date="2005" name="Science">
        <title>The transcriptional landscape of the mammalian genome.</title>
        <authorList>
            <person name="Carninci P."/>
            <person name="Kasukawa T."/>
            <person name="Katayama S."/>
            <person name="Gough J."/>
            <person name="Frith M.C."/>
            <person name="Maeda N."/>
            <person name="Oyama R."/>
            <person name="Ravasi T."/>
            <person name="Lenhard B."/>
            <person name="Wells C."/>
            <person name="Kodzius R."/>
            <person name="Shimokawa K."/>
            <person name="Bajic V.B."/>
            <person name="Brenner S.E."/>
            <person name="Batalov S."/>
            <person name="Forrest A.R."/>
            <person name="Zavolan M."/>
            <person name="Davis M.J."/>
            <person name="Wilming L.G."/>
            <person name="Aidinis V."/>
            <person name="Allen J.E."/>
            <person name="Ambesi-Impiombato A."/>
            <person name="Apweiler R."/>
            <person name="Aturaliya R.N."/>
            <person name="Bailey T.L."/>
            <person name="Bansal M."/>
            <person name="Baxter L."/>
            <person name="Beisel K.W."/>
            <person name="Bersano T."/>
            <person name="Bono H."/>
            <person name="Chalk A.M."/>
            <person name="Chiu K.P."/>
            <person name="Choudhary V."/>
            <person name="Christoffels A."/>
            <person name="Clutterbuck D.R."/>
            <person name="Crowe M.L."/>
            <person name="Dalla E."/>
            <person name="Dalrymple B.P."/>
            <person name="de Bono B."/>
            <person name="Della Gatta G."/>
            <person name="di Bernardo D."/>
            <person name="Down T."/>
            <person name="Engstrom P."/>
            <person name="Fagiolini M."/>
            <person name="Faulkner G."/>
            <person name="Fletcher C.F."/>
            <person name="Fukushima T."/>
            <person name="Furuno M."/>
            <person name="Futaki S."/>
            <person name="Gariboldi M."/>
            <person name="Georgii-Hemming P."/>
            <person name="Gingeras T.R."/>
            <person name="Gojobori T."/>
            <person name="Green R.E."/>
            <person name="Gustincich S."/>
            <person name="Harbers M."/>
            <person name="Hayashi Y."/>
            <person name="Hensch T.K."/>
            <person name="Hirokawa N."/>
            <person name="Hill D."/>
            <person name="Huminiecki L."/>
            <person name="Iacono M."/>
            <person name="Ikeo K."/>
            <person name="Iwama A."/>
            <person name="Ishikawa T."/>
            <person name="Jakt M."/>
            <person name="Kanapin A."/>
            <person name="Katoh M."/>
            <person name="Kawasawa Y."/>
            <person name="Kelso J."/>
            <person name="Kitamura H."/>
            <person name="Kitano H."/>
            <person name="Kollias G."/>
            <person name="Krishnan S.P."/>
            <person name="Kruger A."/>
            <person name="Kummerfeld S.K."/>
            <person name="Kurochkin I.V."/>
            <person name="Lareau L.F."/>
            <person name="Lazarevic D."/>
            <person name="Lipovich L."/>
            <person name="Liu J."/>
            <person name="Liuni S."/>
            <person name="McWilliam S."/>
            <person name="Madan Babu M."/>
            <person name="Madera M."/>
            <person name="Marchionni L."/>
            <person name="Matsuda H."/>
            <person name="Matsuzawa S."/>
            <person name="Miki H."/>
            <person name="Mignone F."/>
            <person name="Miyake S."/>
            <person name="Morris K."/>
            <person name="Mottagui-Tabar S."/>
            <person name="Mulder N."/>
            <person name="Nakano N."/>
            <person name="Nakauchi H."/>
            <person name="Ng P."/>
            <person name="Nilsson R."/>
            <person name="Nishiguchi S."/>
            <person name="Nishikawa S."/>
            <person name="Nori F."/>
            <person name="Ohara O."/>
            <person name="Okazaki Y."/>
            <person name="Orlando V."/>
            <person name="Pang K.C."/>
            <person name="Pavan W.J."/>
            <person name="Pavesi G."/>
            <person name="Pesole G."/>
            <person name="Petrovsky N."/>
            <person name="Piazza S."/>
            <person name="Reed J."/>
            <person name="Reid J.F."/>
            <person name="Ring B.Z."/>
            <person name="Ringwald M."/>
            <person name="Rost B."/>
            <person name="Ruan Y."/>
            <person name="Salzberg S.L."/>
            <person name="Sandelin A."/>
            <person name="Schneider C."/>
            <person name="Schoenbach C."/>
            <person name="Sekiguchi K."/>
            <person name="Semple C.A."/>
            <person name="Seno S."/>
            <person name="Sessa L."/>
            <person name="Sheng Y."/>
            <person name="Shibata Y."/>
            <person name="Shimada H."/>
            <person name="Shimada K."/>
            <person name="Silva D."/>
            <person name="Sinclair B."/>
            <person name="Sperling S."/>
            <person name="Stupka E."/>
            <person name="Sugiura K."/>
            <person name="Sultana R."/>
            <person name="Takenaka Y."/>
            <person name="Taki K."/>
            <person name="Tammoja K."/>
            <person name="Tan S.L."/>
            <person name="Tang S."/>
            <person name="Taylor M.S."/>
            <person name="Tegner J."/>
            <person name="Teichmann S.A."/>
            <person name="Ueda H.R."/>
            <person name="van Nimwegen E."/>
            <person name="Verardo R."/>
            <person name="Wei C.L."/>
            <person name="Yagi K."/>
            <person name="Yamanishi H."/>
            <person name="Zabarovsky E."/>
            <person name="Zhu S."/>
            <person name="Zimmer A."/>
            <person name="Hide W."/>
            <person name="Bult C."/>
            <person name="Grimmond S.M."/>
            <person name="Teasdale R.D."/>
            <person name="Liu E.T."/>
            <person name="Brusic V."/>
            <person name="Quackenbush J."/>
            <person name="Wahlestedt C."/>
            <person name="Mattick J.S."/>
            <person name="Hume D.A."/>
            <person name="Kai C."/>
            <person name="Sasaki D."/>
            <person name="Tomaru Y."/>
            <person name="Fukuda S."/>
            <person name="Kanamori-Katayama M."/>
            <person name="Suzuki M."/>
            <person name="Aoki J."/>
            <person name="Arakawa T."/>
            <person name="Iida J."/>
            <person name="Imamura K."/>
            <person name="Itoh M."/>
            <person name="Kato T."/>
            <person name="Kawaji H."/>
            <person name="Kawagashira N."/>
            <person name="Kawashima T."/>
            <person name="Kojima M."/>
            <person name="Kondo S."/>
            <person name="Konno H."/>
            <person name="Nakano K."/>
            <person name="Ninomiya N."/>
            <person name="Nishio T."/>
            <person name="Okada M."/>
            <person name="Plessy C."/>
            <person name="Shibata K."/>
            <person name="Shiraki T."/>
            <person name="Suzuki S."/>
            <person name="Tagami M."/>
            <person name="Waki K."/>
            <person name="Watahiki A."/>
            <person name="Okamura-Oho Y."/>
            <person name="Suzuki H."/>
            <person name="Kawai J."/>
            <person name="Hayashizaki Y."/>
        </authorList>
    </citation>
    <scope>NUCLEOTIDE SEQUENCE [LARGE SCALE MRNA] (ISOFORM 1)</scope>
    <source>
        <strain>C57BL/6J</strain>
        <tissue>Amnion</tissue>
    </source>
</reference>
<reference key="3">
    <citation type="journal article" date="2009" name="PLoS Biol.">
        <title>Lineage-specific biology revealed by a finished genome assembly of the mouse.</title>
        <authorList>
            <person name="Church D.M."/>
            <person name="Goodstadt L."/>
            <person name="Hillier L.W."/>
            <person name="Zody M.C."/>
            <person name="Goldstein S."/>
            <person name="She X."/>
            <person name="Bult C.J."/>
            <person name="Agarwala R."/>
            <person name="Cherry J.L."/>
            <person name="DiCuccio M."/>
            <person name="Hlavina W."/>
            <person name="Kapustin Y."/>
            <person name="Meric P."/>
            <person name="Maglott D."/>
            <person name="Birtle Z."/>
            <person name="Marques A.C."/>
            <person name="Graves T."/>
            <person name="Zhou S."/>
            <person name="Teague B."/>
            <person name="Potamousis K."/>
            <person name="Churas C."/>
            <person name="Place M."/>
            <person name="Herschleb J."/>
            <person name="Runnheim R."/>
            <person name="Forrest D."/>
            <person name="Amos-Landgraf J."/>
            <person name="Schwartz D.C."/>
            <person name="Cheng Z."/>
            <person name="Lindblad-Toh K."/>
            <person name="Eichler E.E."/>
            <person name="Ponting C.P."/>
        </authorList>
    </citation>
    <scope>NUCLEOTIDE SEQUENCE [LARGE SCALE GENOMIC DNA]</scope>
    <source>
        <strain>C57BL/6J</strain>
    </source>
</reference>
<reference key="4">
    <citation type="journal article" date="2007" name="Proc. Natl. Acad. Sci. U.S.A.">
        <title>Large-scale phosphorylation analysis of mouse liver.</title>
        <authorList>
            <person name="Villen J."/>
            <person name="Beausoleil S.A."/>
            <person name="Gerber S.A."/>
            <person name="Gygi S.P."/>
        </authorList>
    </citation>
    <scope>PHOSPHORYLATION [LARGE SCALE ANALYSIS] AT SER-610</scope>
    <scope>IDENTIFICATION BY MASS SPECTROMETRY [LARGE SCALE ANALYSIS]</scope>
    <source>
        <tissue>Liver</tissue>
    </source>
</reference>
<reference key="5">
    <citation type="journal article" date="2010" name="Cell">
        <title>A tissue-specific atlas of mouse protein phosphorylation and expression.</title>
        <authorList>
            <person name="Huttlin E.L."/>
            <person name="Jedrychowski M.P."/>
            <person name="Elias J.E."/>
            <person name="Goswami T."/>
            <person name="Rad R."/>
            <person name="Beausoleil S.A."/>
            <person name="Villen J."/>
            <person name="Haas W."/>
            <person name="Sowa M.E."/>
            <person name="Gygi S.P."/>
        </authorList>
    </citation>
    <scope>PHOSPHORYLATION [LARGE SCALE ANALYSIS] AT SER-610</scope>
    <scope>IDENTIFICATION BY MASS SPECTROMETRY [LARGE SCALE ANALYSIS]</scope>
    <source>
        <tissue>Brain</tissue>
        <tissue>Brown adipose tissue</tissue>
        <tissue>Heart</tissue>
        <tissue>Kidney</tissue>
        <tissue>Liver</tissue>
        <tissue>Lung</tissue>
        <tissue>Spleen</tissue>
        <tissue>Testis</tissue>
    </source>
</reference>
<proteinExistence type="evidence at protein level"/>
<organism>
    <name type="scientific">Mus musculus</name>
    <name type="common">Mouse</name>
    <dbReference type="NCBI Taxonomy" id="10090"/>
    <lineage>
        <taxon>Eukaryota</taxon>
        <taxon>Metazoa</taxon>
        <taxon>Chordata</taxon>
        <taxon>Craniata</taxon>
        <taxon>Vertebrata</taxon>
        <taxon>Euteleostomi</taxon>
        <taxon>Mammalia</taxon>
        <taxon>Eutheria</taxon>
        <taxon>Euarchontoglires</taxon>
        <taxon>Glires</taxon>
        <taxon>Rodentia</taxon>
        <taxon>Myomorpha</taxon>
        <taxon>Muroidea</taxon>
        <taxon>Muridae</taxon>
        <taxon>Murinae</taxon>
        <taxon>Mus</taxon>
        <taxon>Mus</taxon>
    </lineage>
</organism>
<accession>Q91XS1</accession>
<accession>Q5ND06</accession>
<accession>Q5ND08</accession>
<dbReference type="EC" id="3.1.3.95" evidence="2"/>
<dbReference type="EMBL" id="AF262986">
    <property type="protein sequence ID" value="AAK58180.1"/>
    <property type="molecule type" value="mRNA"/>
</dbReference>
<dbReference type="EMBL" id="AK146641">
    <property type="protein sequence ID" value="BAE27324.1"/>
    <property type="molecule type" value="mRNA"/>
</dbReference>
<dbReference type="EMBL" id="AL596086">
    <property type="status" value="NOT_ANNOTATED_CDS"/>
    <property type="molecule type" value="Genomic_DNA"/>
</dbReference>
<dbReference type="CCDS" id="CCDS25214.1">
    <molecule id="Q91XS1-1"/>
</dbReference>
<dbReference type="CCDS" id="CCDS88215.1">
    <molecule id="Q91XS1-2"/>
</dbReference>
<dbReference type="RefSeq" id="NP_001344830.1">
    <molecule id="Q91XS1-2"/>
    <property type="nucleotide sequence ID" value="NM_001357901.1"/>
</dbReference>
<dbReference type="RefSeq" id="NP_001389514.1">
    <molecule id="Q91XS1-1"/>
    <property type="nucleotide sequence ID" value="NM_001402585.1"/>
</dbReference>
<dbReference type="RefSeq" id="NP_001389515.1">
    <molecule id="Q91XS1-1"/>
    <property type="nucleotide sequence ID" value="NM_001402586.1"/>
</dbReference>
<dbReference type="RefSeq" id="NP_001389516.1">
    <molecule id="Q91XS1-1"/>
    <property type="nucleotide sequence ID" value="NM_001402587.1"/>
</dbReference>
<dbReference type="RefSeq" id="NP_001389517.1">
    <molecule id="Q91XS1-1"/>
    <property type="nucleotide sequence ID" value="NM_001402588.1"/>
</dbReference>
<dbReference type="RefSeq" id="NP_001389518.1">
    <molecule id="Q91XS1-1"/>
    <property type="nucleotide sequence ID" value="NM_001402589.1"/>
</dbReference>
<dbReference type="RefSeq" id="NP_001389519.1">
    <molecule id="Q91XS1-1"/>
    <property type="nucleotide sequence ID" value="NM_001402590.1"/>
</dbReference>
<dbReference type="RefSeq" id="NP_001389520.1">
    <molecule id="Q91XS1-1"/>
    <property type="nucleotide sequence ID" value="NM_001402591.1"/>
</dbReference>
<dbReference type="RefSeq" id="NP_001389521.1">
    <molecule id="Q91XS1-1"/>
    <property type="nucleotide sequence ID" value="NM_001402592.1"/>
</dbReference>
<dbReference type="RefSeq" id="NP_573478.1">
    <molecule id="Q91XS1-1"/>
    <property type="nucleotide sequence ID" value="NM_133215.2"/>
</dbReference>
<dbReference type="RefSeq" id="XP_006532447.1">
    <property type="nucleotide sequence ID" value="XM_006532384.3"/>
</dbReference>
<dbReference type="RefSeq" id="XP_006532448.1">
    <property type="nucleotide sequence ID" value="XM_006532385.3"/>
</dbReference>
<dbReference type="RefSeq" id="XP_011247082.1">
    <property type="nucleotide sequence ID" value="XM_011248780.2"/>
</dbReference>
<dbReference type="SMR" id="Q91XS1"/>
<dbReference type="BioGRID" id="228413">
    <property type="interactions" value="4"/>
</dbReference>
<dbReference type="FunCoup" id="Q91XS1">
    <property type="interactions" value="3120"/>
</dbReference>
<dbReference type="STRING" id="10090.ENSMUSP00000099468"/>
<dbReference type="iPTMnet" id="Q91XS1"/>
<dbReference type="PhosphoSitePlus" id="Q91XS1"/>
<dbReference type="PaxDb" id="10090-ENSMUSP00000099468"/>
<dbReference type="ProteomicsDB" id="286077">
    <molecule id="Q91XS1-1"/>
</dbReference>
<dbReference type="ProteomicsDB" id="286078">
    <molecule id="Q91XS1-2"/>
</dbReference>
<dbReference type="Pumba" id="Q91XS1"/>
<dbReference type="Antibodypedia" id="30984">
    <property type="antibodies" value="183 antibodies from 26 providers"/>
</dbReference>
<dbReference type="DNASU" id="170749"/>
<dbReference type="Ensembl" id="ENSMUST00000092802.12">
    <molecule id="Q91XS1-2"/>
    <property type="protein sequence ID" value="ENSMUSP00000090478.6"/>
    <property type="gene ID" value="ENSMUSG00000018401.18"/>
</dbReference>
<dbReference type="Ensembl" id="ENSMUST00000103179.10">
    <molecule id="Q91XS1-1"/>
    <property type="protein sequence ID" value="ENSMUSP00000099468.4"/>
    <property type="gene ID" value="ENSMUSG00000018401.18"/>
</dbReference>
<dbReference type="Ensembl" id="ENSMUST00000119628.8">
    <molecule id="Q91XS1-1"/>
    <property type="protein sequence ID" value="ENSMUSP00000112902.2"/>
    <property type="gene ID" value="ENSMUSG00000018401.18"/>
</dbReference>
<dbReference type="GeneID" id="170749"/>
<dbReference type="KEGG" id="mmu:170749"/>
<dbReference type="UCSC" id="uc007ktz.1">
    <molecule id="Q91XS1-1"/>
    <property type="organism name" value="mouse"/>
</dbReference>
<dbReference type="UCSC" id="uc007kua.1">
    <molecule id="Q91XS1-2"/>
    <property type="organism name" value="mouse"/>
</dbReference>
<dbReference type="AGR" id="MGI:2180699"/>
<dbReference type="CTD" id="9110"/>
<dbReference type="MGI" id="MGI:2180699">
    <property type="gene designation" value="Mtmr4"/>
</dbReference>
<dbReference type="VEuPathDB" id="HostDB:ENSMUSG00000018401"/>
<dbReference type="eggNOG" id="KOG4471">
    <property type="taxonomic scope" value="Eukaryota"/>
</dbReference>
<dbReference type="GeneTree" id="ENSGT00940000158976"/>
<dbReference type="HOGENOM" id="CLU_001839_2_2_1"/>
<dbReference type="InParanoid" id="Q91XS1"/>
<dbReference type="OMA" id="TRWLQHM"/>
<dbReference type="OrthoDB" id="271628at2759"/>
<dbReference type="PhylomeDB" id="Q91XS1"/>
<dbReference type="TreeFam" id="TF315197"/>
<dbReference type="Reactome" id="R-MMU-1660516">
    <property type="pathway name" value="Synthesis of PIPs at the early endosome membrane"/>
</dbReference>
<dbReference type="Reactome" id="R-MMU-1660517">
    <property type="pathway name" value="Synthesis of PIPs at the late endosome membrane"/>
</dbReference>
<dbReference type="Reactome" id="R-MMU-2173788">
    <property type="pathway name" value="Downregulation of TGF-beta receptor signaling"/>
</dbReference>
<dbReference type="BioGRID-ORCS" id="170749">
    <property type="hits" value="3 hits in 82 CRISPR screens"/>
</dbReference>
<dbReference type="ChiTaRS" id="Mtmr4">
    <property type="organism name" value="mouse"/>
</dbReference>
<dbReference type="PRO" id="PR:Q91XS1"/>
<dbReference type="Proteomes" id="UP000000589">
    <property type="component" value="Chromosome 11"/>
</dbReference>
<dbReference type="RNAct" id="Q91XS1">
    <property type="molecule type" value="protein"/>
</dbReference>
<dbReference type="Bgee" id="ENSMUSG00000018401">
    <property type="expression patterns" value="Expressed in urogenital fold and 240 other cell types or tissues"/>
</dbReference>
<dbReference type="ExpressionAtlas" id="Q91XS1">
    <property type="expression patterns" value="baseline and differential"/>
</dbReference>
<dbReference type="GO" id="GO:0031901">
    <property type="term" value="C:early endosome membrane"/>
    <property type="evidence" value="ECO:0007669"/>
    <property type="project" value="UniProtKB-SubCell"/>
</dbReference>
<dbReference type="GO" id="GO:0036186">
    <property type="term" value="C:early phagosome membrane"/>
    <property type="evidence" value="ECO:0000250"/>
    <property type="project" value="UniProtKB"/>
</dbReference>
<dbReference type="GO" id="GO:0010008">
    <property type="term" value="C:endosome membrane"/>
    <property type="evidence" value="ECO:0000250"/>
    <property type="project" value="UniProtKB"/>
</dbReference>
<dbReference type="GO" id="GO:0031902">
    <property type="term" value="C:late endosome membrane"/>
    <property type="evidence" value="ECO:0007669"/>
    <property type="project" value="UniProtKB-SubCell"/>
</dbReference>
<dbReference type="GO" id="GO:0055038">
    <property type="term" value="C:recycling endosome membrane"/>
    <property type="evidence" value="ECO:0007669"/>
    <property type="project" value="UniProtKB-SubCell"/>
</dbReference>
<dbReference type="GO" id="GO:0060090">
    <property type="term" value="F:molecular adaptor activity"/>
    <property type="evidence" value="ECO:0000250"/>
    <property type="project" value="UniProtKB"/>
</dbReference>
<dbReference type="GO" id="GO:0052629">
    <property type="term" value="F:phosphatidylinositol-3,5-bisphosphate 3-phosphatase activity"/>
    <property type="evidence" value="ECO:0000250"/>
    <property type="project" value="UniProtKB"/>
</dbReference>
<dbReference type="GO" id="GO:0004438">
    <property type="term" value="F:phosphatidylinositol-3-phosphate phosphatase activity"/>
    <property type="evidence" value="ECO:0000250"/>
    <property type="project" value="UniProtKB"/>
</dbReference>
<dbReference type="GO" id="GO:0004725">
    <property type="term" value="F:protein tyrosine phosphatase activity"/>
    <property type="evidence" value="ECO:0007669"/>
    <property type="project" value="UniProtKB-EC"/>
</dbReference>
<dbReference type="GO" id="GO:0008270">
    <property type="term" value="F:zinc ion binding"/>
    <property type="evidence" value="ECO:0007669"/>
    <property type="project" value="UniProtKB-KW"/>
</dbReference>
<dbReference type="GO" id="GO:0061952">
    <property type="term" value="P:midbody abscission"/>
    <property type="evidence" value="ECO:0000250"/>
    <property type="project" value="UniProtKB"/>
</dbReference>
<dbReference type="GO" id="GO:2001136">
    <property type="term" value="P:negative regulation of endocytic recycling"/>
    <property type="evidence" value="ECO:0000250"/>
    <property type="project" value="UniProtKB"/>
</dbReference>
<dbReference type="GO" id="GO:0090382">
    <property type="term" value="P:phagosome maturation"/>
    <property type="evidence" value="ECO:0000250"/>
    <property type="project" value="UniProtKB"/>
</dbReference>
<dbReference type="GO" id="GO:0046856">
    <property type="term" value="P:phosphatidylinositol dephosphorylation"/>
    <property type="evidence" value="ECO:0000250"/>
    <property type="project" value="UniProtKB"/>
</dbReference>
<dbReference type="GO" id="GO:0014894">
    <property type="term" value="P:response to denervation involved in regulation of muscle adaptation"/>
    <property type="evidence" value="ECO:0007669"/>
    <property type="project" value="Ensembl"/>
</dbReference>
<dbReference type="CDD" id="cd15733">
    <property type="entry name" value="FYVE_MTMR4"/>
    <property type="match status" value="1"/>
</dbReference>
<dbReference type="CDD" id="cd13342">
    <property type="entry name" value="PH-GRAM_MTMR4"/>
    <property type="match status" value="1"/>
</dbReference>
<dbReference type="CDD" id="cd14587">
    <property type="entry name" value="PTP-MTMR4"/>
    <property type="match status" value="1"/>
</dbReference>
<dbReference type="FunFam" id="3.30.40.10:FF:000073">
    <property type="entry name" value="myotubularin-related protein 4 isoform X2"/>
    <property type="match status" value="1"/>
</dbReference>
<dbReference type="Gene3D" id="3.30.40.10">
    <property type="entry name" value="Zinc/RING finger domain, C3HC4 (zinc finger)"/>
    <property type="match status" value="1"/>
</dbReference>
<dbReference type="InterPro" id="IPR046978">
    <property type="entry name" value="MTMR4_FYVE"/>
</dbReference>
<dbReference type="InterPro" id="IPR035997">
    <property type="entry name" value="MTMR4_PH-GRAM"/>
</dbReference>
<dbReference type="InterPro" id="IPR030590">
    <property type="entry name" value="MTMR4_PTP"/>
</dbReference>
<dbReference type="InterPro" id="IPR030564">
    <property type="entry name" value="Myotubularin"/>
</dbReference>
<dbReference type="InterPro" id="IPR010569">
    <property type="entry name" value="Myotubularin-like_Pase_dom"/>
</dbReference>
<dbReference type="InterPro" id="IPR029021">
    <property type="entry name" value="Prot-tyrosine_phosphatase-like"/>
</dbReference>
<dbReference type="InterPro" id="IPR016130">
    <property type="entry name" value="Tyr_Pase_AS"/>
</dbReference>
<dbReference type="InterPro" id="IPR000387">
    <property type="entry name" value="Tyr_Pase_dom"/>
</dbReference>
<dbReference type="InterPro" id="IPR000306">
    <property type="entry name" value="Znf_FYVE"/>
</dbReference>
<dbReference type="InterPro" id="IPR017455">
    <property type="entry name" value="Znf_FYVE-rel"/>
</dbReference>
<dbReference type="InterPro" id="IPR011011">
    <property type="entry name" value="Znf_FYVE_PHD"/>
</dbReference>
<dbReference type="InterPro" id="IPR013083">
    <property type="entry name" value="Znf_RING/FYVE/PHD"/>
</dbReference>
<dbReference type="PANTHER" id="PTHR10807">
    <property type="entry name" value="MYOTUBULARIN-RELATED"/>
    <property type="match status" value="1"/>
</dbReference>
<dbReference type="PANTHER" id="PTHR10807:SF64">
    <property type="entry name" value="MYOTUBULARIN-RELATED PROTEIN 4"/>
    <property type="match status" value="1"/>
</dbReference>
<dbReference type="Pfam" id="PF01363">
    <property type="entry name" value="FYVE"/>
    <property type="match status" value="1"/>
</dbReference>
<dbReference type="Pfam" id="PF06602">
    <property type="entry name" value="Myotub-related"/>
    <property type="match status" value="1"/>
</dbReference>
<dbReference type="SMART" id="SM00064">
    <property type="entry name" value="FYVE"/>
    <property type="match status" value="1"/>
</dbReference>
<dbReference type="SUPFAM" id="SSF52799">
    <property type="entry name" value="(Phosphotyrosine protein) phosphatases II"/>
    <property type="match status" value="1"/>
</dbReference>
<dbReference type="SUPFAM" id="SSF57903">
    <property type="entry name" value="FYVE/PHD zinc finger"/>
    <property type="match status" value="1"/>
</dbReference>
<dbReference type="SUPFAM" id="SSF50729">
    <property type="entry name" value="PH domain-like"/>
    <property type="match status" value="1"/>
</dbReference>
<dbReference type="PROSITE" id="PS51339">
    <property type="entry name" value="PPASE_MYOTUBULARIN"/>
    <property type="match status" value="1"/>
</dbReference>
<dbReference type="PROSITE" id="PS00383">
    <property type="entry name" value="TYR_PHOSPHATASE_1"/>
    <property type="match status" value="1"/>
</dbReference>
<dbReference type="PROSITE" id="PS50056">
    <property type="entry name" value="TYR_PHOSPHATASE_2"/>
    <property type="match status" value="1"/>
</dbReference>
<dbReference type="PROSITE" id="PS50178">
    <property type="entry name" value="ZF_FYVE"/>
    <property type="match status" value="1"/>
</dbReference>
<evidence type="ECO:0000250" key="1">
    <source>
        <dbReference type="UniProtKB" id="Q13614"/>
    </source>
</evidence>
<evidence type="ECO:0000250" key="2">
    <source>
        <dbReference type="UniProtKB" id="Q9NYA4"/>
    </source>
</evidence>
<evidence type="ECO:0000255" key="3"/>
<evidence type="ECO:0000255" key="4">
    <source>
        <dbReference type="PROSITE-ProRule" id="PRU00091"/>
    </source>
</evidence>
<evidence type="ECO:0000255" key="5">
    <source>
        <dbReference type="PROSITE-ProRule" id="PRU00669"/>
    </source>
</evidence>
<evidence type="ECO:0000256" key="6">
    <source>
        <dbReference type="SAM" id="MobiDB-lite"/>
    </source>
</evidence>
<evidence type="ECO:0000305" key="7"/>
<evidence type="ECO:0000312" key="8">
    <source>
        <dbReference type="MGI" id="MGI:2180699"/>
    </source>
</evidence>
<evidence type="ECO:0007744" key="9">
    <source>
    </source>
</evidence>
<evidence type="ECO:0007744" key="10">
    <source>
    </source>
</evidence>
<comment type="function">
    <text evidence="2">Lipid phosphatase that specifically dephosphorylates the D-3 position of phosphatidylinositol 3-phosphate and phosphatidylinositol 3,5-bisphosphate, generating phosphatidylinositol and phosphatidylinositol 5-phosphate. Decreases the levels of phosphatidylinositol 3-phosphate, a phospholipid found in cell membranes where it acts as key regulator of both cell signaling and intracellular membrane traffic, in a subset of endosomal membranes to negatively regulate both endocytic recycling and trafficking and/or maturation of endosomes toward lysosomes. Through phosphatidylinositol 3-phosphate turnover in phagosome membranes regulates phagocytosis and phagosome maturation. By decreasing phosphatidylinositol 3-monophosphate (PI3P) levels in immune cells it can also regulate the innate immune response. Beside its lipid phosphatase activity, can also function as a molecular adapter to regulate midbody abscission during mitotic cytokinesis. Can also negatively regulate TGF-beta and BMP signaling through Smad proteins dephosphorylation and retention in endosomes.</text>
</comment>
<comment type="catalytic activity">
    <reaction evidence="2">
        <text>a 1,2-diacyl-sn-glycero-3-phospho-(1D-myo-inositol-3-phosphate) + H2O = a 1,2-diacyl-sn-glycero-3-phospho-(1D-myo-inositol) + phosphate</text>
        <dbReference type="Rhea" id="RHEA:12316"/>
        <dbReference type="ChEBI" id="CHEBI:15377"/>
        <dbReference type="ChEBI" id="CHEBI:43474"/>
        <dbReference type="ChEBI" id="CHEBI:57880"/>
        <dbReference type="ChEBI" id="CHEBI:58088"/>
    </reaction>
    <physiologicalReaction direction="left-to-right" evidence="2">
        <dbReference type="Rhea" id="RHEA:12317"/>
    </physiologicalReaction>
</comment>
<comment type="catalytic activity">
    <reaction evidence="2">
        <text>a 1,2-diacyl-sn-glycero-3-phospho-(1D-myo-inositol-3,5-bisphosphate) + H2O = a 1,2-diacyl-sn-glycero-3-phospho-(1D-myo-inositol-5-phosphate) + phosphate</text>
        <dbReference type="Rhea" id="RHEA:39019"/>
        <dbReference type="ChEBI" id="CHEBI:15377"/>
        <dbReference type="ChEBI" id="CHEBI:43474"/>
        <dbReference type="ChEBI" id="CHEBI:57795"/>
        <dbReference type="ChEBI" id="CHEBI:57923"/>
        <dbReference type="EC" id="3.1.3.95"/>
    </reaction>
    <physiologicalReaction direction="left-to-right" evidence="2">
        <dbReference type="Rhea" id="RHEA:39020"/>
    </physiologicalReaction>
</comment>
<comment type="catalytic activity">
    <reaction evidence="2">
        <text>1,2-dioctanoyl-sn-glycero-3-phospho-(1-D-myo-inositol-3-phosphate) + H2O = 1,2-dioctanoyl-sn-glycero-3-phospho-(1D-myo-inositol) + phosphate</text>
        <dbReference type="Rhea" id="RHEA:42328"/>
        <dbReference type="ChEBI" id="CHEBI:15377"/>
        <dbReference type="ChEBI" id="CHEBI:43474"/>
        <dbReference type="ChEBI" id="CHEBI:65221"/>
        <dbReference type="ChEBI" id="CHEBI:78934"/>
    </reaction>
    <physiologicalReaction direction="left-to-right" evidence="2">
        <dbReference type="Rhea" id="RHEA:42329"/>
    </physiologicalReaction>
</comment>
<comment type="catalytic activity">
    <reaction evidence="2">
        <text>1,2-dioctanoyl-sn-glycero-3-phospho-(1D-myo-inositol-3,5-bisphosphate) + H2O = 1,2-dioctanoyl-sn-glycero-3-phospho-(1D-myo-inositol-5-phosphate) + phosphate</text>
        <dbReference type="Rhea" id="RHEA:45632"/>
        <dbReference type="ChEBI" id="CHEBI:15377"/>
        <dbReference type="ChEBI" id="CHEBI:43474"/>
        <dbReference type="ChEBI" id="CHEBI:78911"/>
        <dbReference type="ChEBI" id="CHEBI:85342"/>
    </reaction>
    <physiologicalReaction direction="left-to-right" evidence="2">
        <dbReference type="Rhea" id="RHEA:45633"/>
    </physiologicalReaction>
</comment>
<comment type="subunit">
    <text evidence="2">Homooligomeric. Forms MTMR3:MTMR4 heterooligomers; regulates the localization of both proteins. The MTMR3:MTMR4 heterooligomer can also recruit both CEP55 and PLK1; occurs during early mitosis, regulates the phosphorylation of CEP55 by PLK1 and its recruitment to the midbody where it can mediate cell abscission. Interacts with SMAD2 and SMAD3; negatively regulates TGF-beta signaling through SMAD2 and SMAD3 dephosphorylation and retention in endosomes. Interacts with SMAD1; negatively regulates BMP signaling through SMAD1 dephosphorylation and retention in endosomes.</text>
</comment>
<comment type="subcellular location">
    <subcellularLocation>
        <location evidence="2">Early endosome membrane</location>
        <topology evidence="2">Peripheral membrane protein</topology>
    </subcellularLocation>
    <subcellularLocation>
        <location evidence="2">Recycling endosome membrane</location>
        <topology evidence="2">Peripheral membrane protein</topology>
    </subcellularLocation>
    <subcellularLocation>
        <location evidence="2">Late endosome membrane</location>
        <topology evidence="2">Peripheral membrane protein</topology>
    </subcellularLocation>
    <subcellularLocation>
        <location evidence="2">Cytoplasmic vesicle</location>
        <location evidence="2">Phagosome membrane</location>
        <topology evidence="2">Peripheral membrane protein</topology>
    </subcellularLocation>
</comment>
<comment type="alternative products">
    <event type="alternative splicing"/>
    <isoform>
        <id>Q91XS1-1</id>
        <name>1</name>
        <sequence type="displayed"/>
    </isoform>
    <isoform>
        <id>Q91XS1-2</id>
        <name>2</name>
        <sequence type="described" ref="VSP_028126"/>
    </isoform>
</comment>
<comment type="domain">
    <text evidence="2">The coiled coil domain mediates the interaction between MTMR3 and MTMR4. It is essential to bring together CEP55 and PLK1 during mitotic abscission.</text>
</comment>
<comment type="PTM">
    <text evidence="2">Ubiquitinated. Ubiquitination by NEDD4 probably leads to proteasomal degradation.</text>
</comment>
<comment type="PTM">
    <text evidence="2">Phosphorylated by CDK1 during mitosis.</text>
</comment>
<comment type="similarity">
    <text evidence="7">Belongs to the protein-tyrosine phosphatase family. Non-receptor class myotubularin subfamily.</text>
</comment>
<comment type="caution">
    <text evidence="7">Although myotubularins have been classified as Protein Tyrosine Phosphatases (PTP), they are specific phosphoinositides 3-phosphatases and not protein phosphatases.</text>
</comment>
<protein>
    <recommendedName>
        <fullName evidence="2">Phosphatidylinositol-3,5-bisphosphate 3-phosphatase MTMR4</fullName>
        <ecNumber evidence="2">3.1.3.95</ecNumber>
    </recommendedName>
    <alternativeName>
        <fullName evidence="8">Myotubularin-related protein 4</fullName>
    </alternativeName>
    <alternativeName>
        <fullName evidence="2">Phosphatidylinositol-3,5-bisphosphate 3-phosphatase</fullName>
    </alternativeName>
    <alternativeName>
        <fullName evidence="2">Phosphatidylinositol-3-phosphate phosphatase</fullName>
    </alternativeName>
</protein>
<gene>
    <name evidence="8" type="primary">Mtmr4</name>
</gene>